<dbReference type="EMBL" id="CP000518">
    <property type="protein sequence ID" value="ABL90339.1"/>
    <property type="molecule type" value="Genomic_DNA"/>
</dbReference>
<dbReference type="SMR" id="A1UBY1"/>
<dbReference type="STRING" id="189918.Mkms_1126"/>
<dbReference type="KEGG" id="mkm:Mkms_1126"/>
<dbReference type="HOGENOM" id="CLU_135723_6_2_11"/>
<dbReference type="OrthoDB" id="9802520at2"/>
<dbReference type="GO" id="GO:0005737">
    <property type="term" value="C:cytoplasm"/>
    <property type="evidence" value="ECO:0007669"/>
    <property type="project" value="UniProtKB-ARBA"/>
</dbReference>
<dbReference type="GO" id="GO:1990904">
    <property type="term" value="C:ribonucleoprotein complex"/>
    <property type="evidence" value="ECO:0007669"/>
    <property type="project" value="UniProtKB-KW"/>
</dbReference>
<dbReference type="GO" id="GO:0005840">
    <property type="term" value="C:ribosome"/>
    <property type="evidence" value="ECO:0007669"/>
    <property type="project" value="UniProtKB-KW"/>
</dbReference>
<dbReference type="GO" id="GO:0003735">
    <property type="term" value="F:structural constituent of ribosome"/>
    <property type="evidence" value="ECO:0007669"/>
    <property type="project" value="InterPro"/>
</dbReference>
<dbReference type="GO" id="GO:0006412">
    <property type="term" value="P:translation"/>
    <property type="evidence" value="ECO:0007669"/>
    <property type="project" value="UniProtKB-UniRule"/>
</dbReference>
<dbReference type="HAMAP" id="MF_00251">
    <property type="entry name" value="Ribosomal_bL36"/>
    <property type="match status" value="1"/>
</dbReference>
<dbReference type="InterPro" id="IPR000473">
    <property type="entry name" value="Ribosomal_bL36"/>
</dbReference>
<dbReference type="InterPro" id="IPR035977">
    <property type="entry name" value="Ribosomal_bL36_sp"/>
</dbReference>
<dbReference type="NCBIfam" id="TIGR01022">
    <property type="entry name" value="rpmJ_bact"/>
    <property type="match status" value="1"/>
</dbReference>
<dbReference type="PANTHER" id="PTHR42888">
    <property type="entry name" value="50S RIBOSOMAL PROTEIN L36, CHLOROPLASTIC"/>
    <property type="match status" value="1"/>
</dbReference>
<dbReference type="PANTHER" id="PTHR42888:SF1">
    <property type="entry name" value="LARGE RIBOSOMAL SUBUNIT PROTEIN BL36C"/>
    <property type="match status" value="1"/>
</dbReference>
<dbReference type="Pfam" id="PF00444">
    <property type="entry name" value="Ribosomal_L36"/>
    <property type="match status" value="1"/>
</dbReference>
<dbReference type="SUPFAM" id="SSF57840">
    <property type="entry name" value="Ribosomal protein L36"/>
    <property type="match status" value="1"/>
</dbReference>
<dbReference type="PROSITE" id="PS00828">
    <property type="entry name" value="RIBOSOMAL_L36"/>
    <property type="match status" value="1"/>
</dbReference>
<gene>
    <name evidence="1" type="primary">rpmJ</name>
    <name type="ordered locus">Mkms_1126</name>
</gene>
<feature type="chain" id="PRO_0000302245" description="Large ribosomal subunit protein bL36">
    <location>
        <begin position="1"/>
        <end position="37"/>
    </location>
</feature>
<keyword id="KW-0687">Ribonucleoprotein</keyword>
<keyword id="KW-0689">Ribosomal protein</keyword>
<name>RL36_MYCSK</name>
<protein>
    <recommendedName>
        <fullName evidence="1">Large ribosomal subunit protein bL36</fullName>
    </recommendedName>
    <alternativeName>
        <fullName evidence="2">50S ribosomal protein L36</fullName>
    </alternativeName>
</protein>
<reference key="1">
    <citation type="submission" date="2006-12" db="EMBL/GenBank/DDBJ databases">
        <title>Complete sequence of chromosome of Mycobacterium sp. KMS.</title>
        <authorList>
            <consortium name="US DOE Joint Genome Institute"/>
            <person name="Copeland A."/>
            <person name="Lucas S."/>
            <person name="Lapidus A."/>
            <person name="Barry K."/>
            <person name="Detter J.C."/>
            <person name="Glavina del Rio T."/>
            <person name="Hammon N."/>
            <person name="Israni S."/>
            <person name="Dalin E."/>
            <person name="Tice H."/>
            <person name="Pitluck S."/>
            <person name="Kiss H."/>
            <person name="Brettin T."/>
            <person name="Bruce D."/>
            <person name="Han C."/>
            <person name="Tapia R."/>
            <person name="Gilna P."/>
            <person name="Schmutz J."/>
            <person name="Larimer F."/>
            <person name="Land M."/>
            <person name="Hauser L."/>
            <person name="Kyrpides N."/>
            <person name="Mikhailova N."/>
            <person name="Miller C.D."/>
            <person name="Richardson P."/>
        </authorList>
    </citation>
    <scope>NUCLEOTIDE SEQUENCE [LARGE SCALE GENOMIC DNA]</scope>
    <source>
        <strain>KMS</strain>
    </source>
</reference>
<proteinExistence type="inferred from homology"/>
<evidence type="ECO:0000255" key="1">
    <source>
        <dbReference type="HAMAP-Rule" id="MF_00251"/>
    </source>
</evidence>
<evidence type="ECO:0000305" key="2"/>
<sequence>MKVNPSVKPICDKCRVIRRHGRVMVICSDPRHKQRQG</sequence>
<accession>A1UBY1</accession>
<comment type="similarity">
    <text evidence="1">Belongs to the bacterial ribosomal protein bL36 family.</text>
</comment>
<organism>
    <name type="scientific">Mycobacterium sp. (strain KMS)</name>
    <dbReference type="NCBI Taxonomy" id="189918"/>
    <lineage>
        <taxon>Bacteria</taxon>
        <taxon>Bacillati</taxon>
        <taxon>Actinomycetota</taxon>
        <taxon>Actinomycetes</taxon>
        <taxon>Mycobacteriales</taxon>
        <taxon>Mycobacteriaceae</taxon>
        <taxon>Mycobacterium</taxon>
    </lineage>
</organism>